<proteinExistence type="inferred from homology"/>
<dbReference type="EC" id="6.1.1.7"/>
<dbReference type="EMBL" id="AE000520">
    <property type="protein sequence ID" value="AAC65968.1"/>
    <property type="molecule type" value="Genomic_DNA"/>
</dbReference>
<dbReference type="PIR" id="E71253">
    <property type="entry name" value="E71253"/>
</dbReference>
<dbReference type="RefSeq" id="WP_010882461.1">
    <property type="nucleotide sequence ID" value="NC_021490.2"/>
</dbReference>
<dbReference type="SMR" id="O83980"/>
<dbReference type="IntAct" id="O83980">
    <property type="interactions" value="1"/>
</dbReference>
<dbReference type="STRING" id="243276.TP_1017"/>
<dbReference type="EnsemblBacteria" id="AAC65968">
    <property type="protein sequence ID" value="AAC65968"/>
    <property type="gene ID" value="TP_1017"/>
</dbReference>
<dbReference type="KEGG" id="tpa:TP_1017"/>
<dbReference type="KEGG" id="tpw:TPANIC_1017"/>
<dbReference type="eggNOG" id="COG0013">
    <property type="taxonomic scope" value="Bacteria"/>
</dbReference>
<dbReference type="HOGENOM" id="CLU_004485_0_2_12"/>
<dbReference type="OrthoDB" id="9803884at2"/>
<dbReference type="Proteomes" id="UP000000811">
    <property type="component" value="Chromosome"/>
</dbReference>
<dbReference type="GO" id="GO:0005737">
    <property type="term" value="C:cytoplasm"/>
    <property type="evidence" value="ECO:0007669"/>
    <property type="project" value="UniProtKB-SubCell"/>
</dbReference>
<dbReference type="GO" id="GO:0004813">
    <property type="term" value="F:alanine-tRNA ligase activity"/>
    <property type="evidence" value="ECO:0007669"/>
    <property type="project" value="UniProtKB-UniRule"/>
</dbReference>
<dbReference type="GO" id="GO:0002161">
    <property type="term" value="F:aminoacyl-tRNA deacylase activity"/>
    <property type="evidence" value="ECO:0007669"/>
    <property type="project" value="TreeGrafter"/>
</dbReference>
<dbReference type="GO" id="GO:0005524">
    <property type="term" value="F:ATP binding"/>
    <property type="evidence" value="ECO:0007669"/>
    <property type="project" value="UniProtKB-UniRule"/>
</dbReference>
<dbReference type="GO" id="GO:0000049">
    <property type="term" value="F:tRNA binding"/>
    <property type="evidence" value="ECO:0007669"/>
    <property type="project" value="UniProtKB-KW"/>
</dbReference>
<dbReference type="GO" id="GO:0008270">
    <property type="term" value="F:zinc ion binding"/>
    <property type="evidence" value="ECO:0007669"/>
    <property type="project" value="UniProtKB-UniRule"/>
</dbReference>
<dbReference type="GO" id="GO:0006419">
    <property type="term" value="P:alanyl-tRNA aminoacylation"/>
    <property type="evidence" value="ECO:0007669"/>
    <property type="project" value="UniProtKB-UniRule"/>
</dbReference>
<dbReference type="CDD" id="cd00673">
    <property type="entry name" value="AlaRS_core"/>
    <property type="match status" value="1"/>
</dbReference>
<dbReference type="FunFam" id="3.30.980.10:FF:000004">
    <property type="entry name" value="Alanine--tRNA ligase, cytoplasmic"/>
    <property type="match status" value="1"/>
</dbReference>
<dbReference type="Gene3D" id="3.30.54.20">
    <property type="match status" value="1"/>
</dbReference>
<dbReference type="Gene3D" id="3.30.930.10">
    <property type="entry name" value="Bira Bifunctional Protein, Domain 2"/>
    <property type="match status" value="1"/>
</dbReference>
<dbReference type="Gene3D" id="3.30.980.10">
    <property type="entry name" value="Threonyl-trna Synthetase, Chain A, domain 2"/>
    <property type="match status" value="1"/>
</dbReference>
<dbReference type="HAMAP" id="MF_00036_B">
    <property type="entry name" value="Ala_tRNA_synth_B"/>
    <property type="match status" value="1"/>
</dbReference>
<dbReference type="InterPro" id="IPR045864">
    <property type="entry name" value="aa-tRNA-synth_II/BPL/LPL"/>
</dbReference>
<dbReference type="InterPro" id="IPR002318">
    <property type="entry name" value="Ala-tRNA-lgiase_IIc"/>
</dbReference>
<dbReference type="InterPro" id="IPR018162">
    <property type="entry name" value="Ala-tRNA-ligase_IIc_anticod-bd"/>
</dbReference>
<dbReference type="InterPro" id="IPR018165">
    <property type="entry name" value="Ala-tRNA-synth_IIc_core"/>
</dbReference>
<dbReference type="InterPro" id="IPR018164">
    <property type="entry name" value="Ala-tRNA-synth_IIc_N"/>
</dbReference>
<dbReference type="InterPro" id="IPR050058">
    <property type="entry name" value="Ala-tRNA_ligase"/>
</dbReference>
<dbReference type="InterPro" id="IPR023033">
    <property type="entry name" value="Ala_tRNA_ligase_euk/bac"/>
</dbReference>
<dbReference type="InterPro" id="IPR018163">
    <property type="entry name" value="Thr/Ala-tRNA-synth_IIc_edit"/>
</dbReference>
<dbReference type="InterPro" id="IPR012947">
    <property type="entry name" value="tRNA_SAD"/>
</dbReference>
<dbReference type="NCBIfam" id="TIGR00344">
    <property type="entry name" value="alaS"/>
    <property type="match status" value="1"/>
</dbReference>
<dbReference type="NCBIfam" id="NF002436">
    <property type="entry name" value="PRK01584.1"/>
    <property type="match status" value="1"/>
</dbReference>
<dbReference type="PANTHER" id="PTHR11777:SF9">
    <property type="entry name" value="ALANINE--TRNA LIGASE, CYTOPLASMIC"/>
    <property type="match status" value="1"/>
</dbReference>
<dbReference type="PANTHER" id="PTHR11777">
    <property type="entry name" value="ALANYL-TRNA SYNTHETASE"/>
    <property type="match status" value="1"/>
</dbReference>
<dbReference type="Pfam" id="PF01411">
    <property type="entry name" value="tRNA-synt_2c"/>
    <property type="match status" value="1"/>
</dbReference>
<dbReference type="Pfam" id="PF07973">
    <property type="entry name" value="tRNA_SAD"/>
    <property type="match status" value="1"/>
</dbReference>
<dbReference type="PRINTS" id="PR00980">
    <property type="entry name" value="TRNASYNTHALA"/>
</dbReference>
<dbReference type="SMART" id="SM00863">
    <property type="entry name" value="tRNA_SAD"/>
    <property type="match status" value="1"/>
</dbReference>
<dbReference type="SUPFAM" id="SSF55681">
    <property type="entry name" value="Class II aaRS and biotin synthetases"/>
    <property type="match status" value="1"/>
</dbReference>
<dbReference type="SUPFAM" id="SSF101353">
    <property type="entry name" value="Putative anticodon-binding domain of alanyl-tRNA synthetase (AlaRS)"/>
    <property type="match status" value="1"/>
</dbReference>
<dbReference type="SUPFAM" id="SSF55186">
    <property type="entry name" value="ThrRS/AlaRS common domain"/>
    <property type="match status" value="1"/>
</dbReference>
<dbReference type="PROSITE" id="PS50860">
    <property type="entry name" value="AA_TRNA_LIGASE_II_ALA"/>
    <property type="match status" value="1"/>
</dbReference>
<organism>
    <name type="scientific">Treponema pallidum (strain Nichols)</name>
    <dbReference type="NCBI Taxonomy" id="243276"/>
    <lineage>
        <taxon>Bacteria</taxon>
        <taxon>Pseudomonadati</taxon>
        <taxon>Spirochaetota</taxon>
        <taxon>Spirochaetia</taxon>
        <taxon>Spirochaetales</taxon>
        <taxon>Treponemataceae</taxon>
        <taxon>Treponema</taxon>
    </lineage>
</organism>
<gene>
    <name type="primary">alaS</name>
    <name type="ordered locus">TP_1017</name>
</gene>
<accession>O83980</accession>
<keyword id="KW-0030">Aminoacyl-tRNA synthetase</keyword>
<keyword id="KW-0067">ATP-binding</keyword>
<keyword id="KW-0963">Cytoplasm</keyword>
<keyword id="KW-0436">Ligase</keyword>
<keyword id="KW-0479">Metal-binding</keyword>
<keyword id="KW-0547">Nucleotide-binding</keyword>
<keyword id="KW-0648">Protein biosynthesis</keyword>
<keyword id="KW-1185">Reference proteome</keyword>
<keyword id="KW-0694">RNA-binding</keyword>
<keyword id="KW-0820">tRNA-binding</keyword>
<keyword id="KW-0862">Zinc</keyword>
<reference key="1">
    <citation type="journal article" date="1998" name="Science">
        <title>Complete genome sequence of Treponema pallidum, the syphilis spirochete.</title>
        <authorList>
            <person name="Fraser C.M."/>
            <person name="Norris S.J."/>
            <person name="Weinstock G.M."/>
            <person name="White O."/>
            <person name="Sutton G.G."/>
            <person name="Dodson R.J."/>
            <person name="Gwinn M.L."/>
            <person name="Hickey E.K."/>
            <person name="Clayton R.A."/>
            <person name="Ketchum K.A."/>
            <person name="Sodergren E."/>
            <person name="Hardham J.M."/>
            <person name="McLeod M.P."/>
            <person name="Salzberg S.L."/>
            <person name="Peterson J.D."/>
            <person name="Khalak H.G."/>
            <person name="Richardson D.L."/>
            <person name="Howell J.K."/>
            <person name="Chidambaram M."/>
            <person name="Utterback T.R."/>
            <person name="McDonald L.A."/>
            <person name="Artiach P."/>
            <person name="Bowman C."/>
            <person name="Cotton M.D."/>
            <person name="Fujii C."/>
            <person name="Garland S.A."/>
            <person name="Hatch B."/>
            <person name="Horst K."/>
            <person name="Roberts K.M."/>
            <person name="Sandusky M."/>
            <person name="Weidman J.F."/>
            <person name="Smith H.O."/>
            <person name="Venter J.C."/>
        </authorList>
    </citation>
    <scope>NUCLEOTIDE SEQUENCE [LARGE SCALE GENOMIC DNA]</scope>
    <source>
        <strain>Nichols</strain>
    </source>
</reference>
<comment type="function">
    <text evidence="1">Catalyzes the attachment of alanine to tRNA(Ala) in a two-step reaction: alanine is first activated by ATP to form Ala-AMP and then transferred to the acceptor end of tRNA(Ala). Also edits incorrectly charged Ser-tRNA(Ala) and Gly-tRNA(Ala) via its editing domain (By similarity).</text>
</comment>
<comment type="catalytic activity">
    <reaction>
        <text>tRNA(Ala) + L-alanine + ATP = L-alanyl-tRNA(Ala) + AMP + diphosphate</text>
        <dbReference type="Rhea" id="RHEA:12540"/>
        <dbReference type="Rhea" id="RHEA-COMP:9657"/>
        <dbReference type="Rhea" id="RHEA-COMP:9923"/>
        <dbReference type="ChEBI" id="CHEBI:30616"/>
        <dbReference type="ChEBI" id="CHEBI:33019"/>
        <dbReference type="ChEBI" id="CHEBI:57972"/>
        <dbReference type="ChEBI" id="CHEBI:78442"/>
        <dbReference type="ChEBI" id="CHEBI:78497"/>
        <dbReference type="ChEBI" id="CHEBI:456215"/>
        <dbReference type="EC" id="6.1.1.7"/>
    </reaction>
</comment>
<comment type="cofactor">
    <cofactor evidence="1">
        <name>Zn(2+)</name>
        <dbReference type="ChEBI" id="CHEBI:29105"/>
    </cofactor>
    <text evidence="1">Binds 1 zinc ion per subunit.</text>
</comment>
<comment type="subcellular location">
    <subcellularLocation>
        <location evidence="1">Cytoplasm</location>
    </subcellularLocation>
</comment>
<comment type="domain">
    <text evidence="1">Consists of two domains; the N-terminal catalytic domain (in this organism this is shorter than usual) and the editing domain; the C-terminal C-Ala domain found in most orthologs is missing. The editing domain removes incorrectly charged amino acids (By similarity).</text>
</comment>
<comment type="similarity">
    <text evidence="3">Belongs to the class-II aminoacyl-tRNA synthetase family.</text>
</comment>
<name>SYA_TREPA</name>
<feature type="chain" id="PRO_0000075237" description="Alanine--tRNA ligase">
    <location>
        <begin position="1"/>
        <end position="605"/>
    </location>
</feature>
<feature type="binding site" evidence="2">
    <location>
        <position position="463"/>
    </location>
    <ligand>
        <name>Zn(2+)</name>
        <dbReference type="ChEBI" id="CHEBI:29105"/>
    </ligand>
</feature>
<feature type="binding site" evidence="2">
    <location>
        <position position="467"/>
    </location>
    <ligand>
        <name>Zn(2+)</name>
        <dbReference type="ChEBI" id="CHEBI:29105"/>
    </ligand>
</feature>
<feature type="binding site" evidence="2">
    <location>
        <position position="565"/>
    </location>
    <ligand>
        <name>Zn(2+)</name>
        <dbReference type="ChEBI" id="CHEBI:29105"/>
    </ligand>
</feature>
<feature type="binding site" evidence="2">
    <location>
        <position position="569"/>
    </location>
    <ligand>
        <name>Zn(2+)</name>
        <dbReference type="ChEBI" id="CHEBI:29105"/>
    </ligand>
</feature>
<evidence type="ECO:0000250" key="1"/>
<evidence type="ECO:0000255" key="2"/>
<evidence type="ECO:0000305" key="3"/>
<protein>
    <recommendedName>
        <fullName>Alanine--tRNA ligase</fullName>
        <ecNumber>6.1.1.7</ecNumber>
    </recommendedName>
    <alternativeName>
        <fullName>Alanyl-tRNA synthetase</fullName>
        <shortName>AlaRS</shortName>
    </alternativeName>
</protein>
<sequence>MSIPIRADQLRSRYLAFFSQKAHVVISGKSLVPEHDPTVLFTTAGMHPLVPYLMGEPHPAGTRLVNAQKCLRTGDIDAVGDNSHLTFFEMLGNWSLGDYFKEEAIAFSFEFLTGAPWLGISPDRLSVTVFAGDEAVARDEESAAIWERLGIARTHIHFLPRADNWWGPTGETGPCGPDTEIFFDTGVPPCSVSCRPGCSCGKYVEIWNDVFMQYRKDADGRYRPLERYCVDTGMGIERTVAVLQGKRSVYDTEIFTPLLERIGQLCGKRYGCQGAHDVSMRIVCDHIRAATFILGDPVPVRPSNVGAGYVLRRIIRRSVRHGRKLGIDGEFLSSLARVVIGQYAAVYPELEEKATCIAQELANEERKFLDALRKGEAEYERMIPKFLQGTEREIPGSVAFRLYDTYGFPLELTEELARESGLRVDRAGFDTAFQAHQACSRIGAQRVFKGGLADHSAETTAYHTATHLLHQALRVVLGTHVQQKGSNITAERLRFDFSHPRPMSAQEKVQVEQLVNEQIRADLPVCCEVMSLEDAMNSGAVALFGEKYESTVKVYSIGTFSREVCGGPHVARTGQLGRFSIQKEQSSAAGVRRIRAILEKSGEKS</sequence>